<organism>
    <name type="scientific">Bungarus multicinctus</name>
    <name type="common">Many-banded krait</name>
    <dbReference type="NCBI Taxonomy" id="8616"/>
    <lineage>
        <taxon>Eukaryota</taxon>
        <taxon>Metazoa</taxon>
        <taxon>Chordata</taxon>
        <taxon>Craniata</taxon>
        <taxon>Vertebrata</taxon>
        <taxon>Euteleostomi</taxon>
        <taxon>Lepidosauria</taxon>
        <taxon>Squamata</taxon>
        <taxon>Bifurcata</taxon>
        <taxon>Unidentata</taxon>
        <taxon>Episquamata</taxon>
        <taxon>Toxicofera</taxon>
        <taxon>Serpentes</taxon>
        <taxon>Colubroidea</taxon>
        <taxon>Elapidae</taxon>
        <taxon>Bungarinae</taxon>
        <taxon>Bungarus</taxon>
    </lineage>
</organism>
<name>3NO52_BUNMU</name>
<protein>
    <recommendedName>
        <fullName>Long neurotoxin homolog NTL2</fullName>
    </recommendedName>
</protein>
<proteinExistence type="inferred from homology"/>
<feature type="signal peptide" evidence="1">
    <location>
        <begin position="1"/>
        <end position="21"/>
    </location>
</feature>
<feature type="chain" id="PRO_0000035427" description="Long neurotoxin homolog NTL2">
    <location>
        <begin position="22"/>
        <end position="89"/>
    </location>
</feature>
<feature type="short sequence motif" description="Cell attachment site" evidence="2">
    <location>
        <begin position="54"/>
        <end position="56"/>
    </location>
</feature>
<feature type="disulfide bond" evidence="1">
    <location>
        <begin position="24"/>
        <end position="45"/>
    </location>
</feature>
<feature type="disulfide bond" evidence="1">
    <location>
        <begin position="27"/>
        <end position="32"/>
    </location>
</feature>
<feature type="disulfide bond" evidence="1">
    <location>
        <begin position="38"/>
        <end position="66"/>
    </location>
</feature>
<feature type="disulfide bond" evidence="1">
    <location>
        <begin position="70"/>
        <end position="81"/>
    </location>
</feature>
<feature type="disulfide bond" evidence="1">
    <location>
        <begin position="82"/>
        <end position="87"/>
    </location>
</feature>
<reference key="1">
    <citation type="journal article" date="1998" name="Biochem. Mol. Biol. Int.">
        <title>cDNA cloning and sequence analysis of six neurotoxin-like proteins from Chinese continental banded krait.</title>
        <authorList>
            <person name="Qian Y.-C."/>
            <person name="Fan C.-Y."/>
            <person name="Gong Y."/>
            <person name="Yang S.-L."/>
        </authorList>
    </citation>
    <scope>NUCLEOTIDE SEQUENCE [MRNA]</scope>
    <source>
        <tissue>Venom gland</tissue>
    </source>
</reference>
<evidence type="ECO:0000250" key="1">
    <source>
        <dbReference type="UniProtKB" id="Q9YGJ0"/>
    </source>
</evidence>
<evidence type="ECO:0000255" key="2">
    <source>
        <dbReference type="PROSITE-ProRule" id="PRU00293"/>
    </source>
</evidence>
<evidence type="ECO:0000305" key="3"/>
<accession>Q9YGH9</accession>
<comment type="function">
    <text evidence="1">Exhibits M2 muscarinic acetylcholine receptor (CHRM2)-blocking activity, but has a weak binding activity toward nicotinic AChR. Moreover, it inhibits collagen-induced platelet aggregation.</text>
</comment>
<comment type="subcellular location">
    <subcellularLocation>
        <location evidence="1">Secreted</location>
    </subcellularLocation>
</comment>
<comment type="tissue specificity">
    <text evidence="3">Expressed by the venom gland.</text>
</comment>
<comment type="similarity">
    <text evidence="3">Belongs to the three-finger toxin family. Ancestral subfamily. Orphan group V sub-subfamily.</text>
</comment>
<dbReference type="EMBL" id="AJ223251">
    <property type="protein sequence ID" value="CAA11214.1"/>
    <property type="molecule type" value="mRNA"/>
</dbReference>
<dbReference type="SMR" id="Q9YGH9"/>
<dbReference type="GO" id="GO:0005576">
    <property type="term" value="C:extracellular region"/>
    <property type="evidence" value="ECO:0007669"/>
    <property type="project" value="UniProtKB-SubCell"/>
</dbReference>
<dbReference type="GO" id="GO:0090729">
    <property type="term" value="F:toxin activity"/>
    <property type="evidence" value="ECO:0007669"/>
    <property type="project" value="UniProtKB-KW"/>
</dbReference>
<dbReference type="CDD" id="cd00206">
    <property type="entry name" value="TFP_snake_toxin"/>
    <property type="match status" value="1"/>
</dbReference>
<dbReference type="FunFam" id="2.10.60.10:FF:000024">
    <property type="entry name" value="Cytotoxin 1"/>
    <property type="match status" value="1"/>
</dbReference>
<dbReference type="Gene3D" id="2.10.60.10">
    <property type="entry name" value="CD59"/>
    <property type="match status" value="1"/>
</dbReference>
<dbReference type="InterPro" id="IPR003571">
    <property type="entry name" value="Snake_3FTx"/>
</dbReference>
<dbReference type="InterPro" id="IPR045860">
    <property type="entry name" value="Snake_toxin-like_sf"/>
</dbReference>
<dbReference type="InterPro" id="IPR054131">
    <property type="entry name" value="Toxin_cobra-type"/>
</dbReference>
<dbReference type="Pfam" id="PF21947">
    <property type="entry name" value="Toxin_cobra-type"/>
    <property type="match status" value="1"/>
</dbReference>
<dbReference type="SUPFAM" id="SSF57302">
    <property type="entry name" value="Snake toxin-like"/>
    <property type="match status" value="1"/>
</dbReference>
<sequence>MKTLLLSLVVVIIVCLDLGYTMQCKTCSFYTCPNSETCPDGKNICVKRSWTAVRGDGPKREIRRECAATCPPSKLGLTVFCCTTDNCYH</sequence>
<keyword id="KW-1217">Cell adhesion impairing toxin</keyword>
<keyword id="KW-1015">Disulfide bond</keyword>
<keyword id="KW-1214">G-protein coupled acetylcholine receptor impairing toxin</keyword>
<keyword id="KW-1213">G-protein coupled receptor impairing toxin</keyword>
<keyword id="KW-1199">Hemostasis impairing toxin</keyword>
<keyword id="KW-0528">Neurotoxin</keyword>
<keyword id="KW-1201">Platelet aggregation inhibiting toxin</keyword>
<keyword id="KW-0964">Secreted</keyword>
<keyword id="KW-0732">Signal</keyword>
<keyword id="KW-0800">Toxin</keyword>